<reference key="1">
    <citation type="journal article" date="2007" name="Proc. Natl. Acad. Sci. U.S.A.">
        <title>Genomic and metabolic adaptations of Methanobrevibacter smithii to the human gut.</title>
        <authorList>
            <person name="Samuel B.S."/>
            <person name="Hansen E.E."/>
            <person name="Manchester J.K."/>
            <person name="Coutinho P.M."/>
            <person name="Henrissat B."/>
            <person name="Fulton R."/>
            <person name="Latreille P."/>
            <person name="Kim K."/>
            <person name="Wilson R.K."/>
            <person name="Gordon J.I."/>
        </authorList>
    </citation>
    <scope>NUCLEOTIDE SEQUENCE [LARGE SCALE GENOMIC DNA]</scope>
    <source>
        <strain>ATCC 35061 / DSM 861 / OCM 144 / PS</strain>
    </source>
</reference>
<protein>
    <recommendedName>
        <fullName evidence="1">N-acetyl-gamma-glutamyl-phosphate reductase</fullName>
        <shortName evidence="1">AGPR</shortName>
        <ecNumber evidence="1">1.2.1.38</ecNumber>
    </recommendedName>
    <alternativeName>
        <fullName evidence="1">N-acetyl-glutamate semialdehyde dehydrogenase</fullName>
        <shortName evidence="1">NAGSA dehydrogenase</shortName>
    </alternativeName>
</protein>
<name>ARGC_METS3</name>
<feature type="chain" id="PRO_1000011015" description="N-acetyl-gamma-glutamyl-phosphate reductase">
    <location>
        <begin position="1"/>
        <end position="339"/>
    </location>
</feature>
<feature type="active site" evidence="1">
    <location>
        <position position="144"/>
    </location>
</feature>
<accession>A5ULI7</accession>
<gene>
    <name evidence="1" type="primary">argC</name>
    <name type="ordered locus">Msm_0860</name>
</gene>
<dbReference type="EC" id="1.2.1.38" evidence="1"/>
<dbReference type="EMBL" id="CP000678">
    <property type="protein sequence ID" value="ABQ87065.1"/>
    <property type="molecule type" value="Genomic_DNA"/>
</dbReference>
<dbReference type="RefSeq" id="WP_011954131.1">
    <property type="nucleotide sequence ID" value="NZ_CP117965.1"/>
</dbReference>
<dbReference type="SMR" id="A5ULI7"/>
<dbReference type="STRING" id="420247.Msm_0860"/>
<dbReference type="EnsemblBacteria" id="ABQ87065">
    <property type="protein sequence ID" value="ABQ87065"/>
    <property type="gene ID" value="Msm_0860"/>
</dbReference>
<dbReference type="GeneID" id="78817493"/>
<dbReference type="KEGG" id="msi:Msm_0860"/>
<dbReference type="PATRIC" id="fig|420247.28.peg.857"/>
<dbReference type="eggNOG" id="arCOG00495">
    <property type="taxonomic scope" value="Archaea"/>
</dbReference>
<dbReference type="HOGENOM" id="CLU_006384_0_1_2"/>
<dbReference type="UniPathway" id="UPA00068">
    <property type="reaction ID" value="UER00108"/>
</dbReference>
<dbReference type="Proteomes" id="UP000001992">
    <property type="component" value="Chromosome"/>
</dbReference>
<dbReference type="GO" id="GO:0005737">
    <property type="term" value="C:cytoplasm"/>
    <property type="evidence" value="ECO:0007669"/>
    <property type="project" value="UniProtKB-SubCell"/>
</dbReference>
<dbReference type="GO" id="GO:0003942">
    <property type="term" value="F:N-acetyl-gamma-glutamyl-phosphate reductase activity"/>
    <property type="evidence" value="ECO:0007669"/>
    <property type="project" value="UniProtKB-UniRule"/>
</dbReference>
<dbReference type="GO" id="GO:0051287">
    <property type="term" value="F:NAD binding"/>
    <property type="evidence" value="ECO:0007669"/>
    <property type="project" value="InterPro"/>
</dbReference>
<dbReference type="GO" id="GO:0070401">
    <property type="term" value="F:NADP+ binding"/>
    <property type="evidence" value="ECO:0007669"/>
    <property type="project" value="InterPro"/>
</dbReference>
<dbReference type="GO" id="GO:0006526">
    <property type="term" value="P:L-arginine biosynthetic process"/>
    <property type="evidence" value="ECO:0007669"/>
    <property type="project" value="UniProtKB-UniRule"/>
</dbReference>
<dbReference type="CDD" id="cd23934">
    <property type="entry name" value="AGPR_1_C"/>
    <property type="match status" value="1"/>
</dbReference>
<dbReference type="CDD" id="cd17895">
    <property type="entry name" value="AGPR_1_N"/>
    <property type="match status" value="1"/>
</dbReference>
<dbReference type="Gene3D" id="3.30.360.10">
    <property type="entry name" value="Dihydrodipicolinate Reductase, domain 2"/>
    <property type="match status" value="1"/>
</dbReference>
<dbReference type="Gene3D" id="3.40.50.720">
    <property type="entry name" value="NAD(P)-binding Rossmann-like Domain"/>
    <property type="match status" value="1"/>
</dbReference>
<dbReference type="HAMAP" id="MF_00150">
    <property type="entry name" value="ArgC_type1"/>
    <property type="match status" value="1"/>
</dbReference>
<dbReference type="InterPro" id="IPR000706">
    <property type="entry name" value="AGPR_type-1"/>
</dbReference>
<dbReference type="InterPro" id="IPR036291">
    <property type="entry name" value="NAD(P)-bd_dom_sf"/>
</dbReference>
<dbReference type="InterPro" id="IPR050085">
    <property type="entry name" value="NAGSA_dehydrogenase"/>
</dbReference>
<dbReference type="InterPro" id="IPR000534">
    <property type="entry name" value="Semialdehyde_DH_NAD-bd"/>
</dbReference>
<dbReference type="NCBIfam" id="TIGR01850">
    <property type="entry name" value="argC"/>
    <property type="match status" value="1"/>
</dbReference>
<dbReference type="PANTHER" id="PTHR32338:SF10">
    <property type="entry name" value="N-ACETYL-GAMMA-GLUTAMYL-PHOSPHATE REDUCTASE, CHLOROPLASTIC-RELATED"/>
    <property type="match status" value="1"/>
</dbReference>
<dbReference type="PANTHER" id="PTHR32338">
    <property type="entry name" value="N-ACETYL-GAMMA-GLUTAMYL-PHOSPHATE REDUCTASE, CHLOROPLASTIC-RELATED-RELATED"/>
    <property type="match status" value="1"/>
</dbReference>
<dbReference type="Pfam" id="PF01118">
    <property type="entry name" value="Semialdhyde_dh"/>
    <property type="match status" value="1"/>
</dbReference>
<dbReference type="Pfam" id="PF22698">
    <property type="entry name" value="Semialdhyde_dhC_1"/>
    <property type="match status" value="1"/>
</dbReference>
<dbReference type="SMART" id="SM00859">
    <property type="entry name" value="Semialdhyde_dh"/>
    <property type="match status" value="1"/>
</dbReference>
<dbReference type="SUPFAM" id="SSF55347">
    <property type="entry name" value="Glyceraldehyde-3-phosphate dehydrogenase-like, C-terminal domain"/>
    <property type="match status" value="1"/>
</dbReference>
<dbReference type="SUPFAM" id="SSF51735">
    <property type="entry name" value="NAD(P)-binding Rossmann-fold domains"/>
    <property type="match status" value="1"/>
</dbReference>
<proteinExistence type="inferred from homology"/>
<organism>
    <name type="scientific">Methanobrevibacter smithii (strain ATCC 35061 / DSM 861 / OCM 144 / PS)</name>
    <dbReference type="NCBI Taxonomy" id="420247"/>
    <lineage>
        <taxon>Archaea</taxon>
        <taxon>Methanobacteriati</taxon>
        <taxon>Methanobacteriota</taxon>
        <taxon>Methanomada group</taxon>
        <taxon>Methanobacteria</taxon>
        <taxon>Methanobacteriales</taxon>
        <taxon>Methanobacteriaceae</taxon>
        <taxon>Methanobrevibacter</taxon>
    </lineage>
</organism>
<comment type="function">
    <text evidence="1">Catalyzes the NADPH-dependent reduction of N-acetyl-5-glutamyl phosphate to yield N-acetyl-L-glutamate 5-semialdehyde.</text>
</comment>
<comment type="catalytic activity">
    <reaction evidence="1">
        <text>N-acetyl-L-glutamate 5-semialdehyde + phosphate + NADP(+) = N-acetyl-L-glutamyl 5-phosphate + NADPH + H(+)</text>
        <dbReference type="Rhea" id="RHEA:21588"/>
        <dbReference type="ChEBI" id="CHEBI:15378"/>
        <dbReference type="ChEBI" id="CHEBI:29123"/>
        <dbReference type="ChEBI" id="CHEBI:43474"/>
        <dbReference type="ChEBI" id="CHEBI:57783"/>
        <dbReference type="ChEBI" id="CHEBI:57936"/>
        <dbReference type="ChEBI" id="CHEBI:58349"/>
        <dbReference type="EC" id="1.2.1.38"/>
    </reaction>
</comment>
<comment type="pathway">
    <text evidence="1">Amino-acid biosynthesis; L-arginine biosynthesis; N(2)-acetyl-L-ornithine from L-glutamate: step 3/4.</text>
</comment>
<comment type="subcellular location">
    <subcellularLocation>
        <location evidence="1">Cytoplasm</location>
    </subcellularLocation>
</comment>
<comment type="similarity">
    <text evidence="1">Belongs to the NAGSA dehydrogenase family. Type 1 subfamily.</text>
</comment>
<sequence length="339" mass="37613">MYNVAIVGASGYTGGELLRMLLNHSEVEVNNITSRKYDGTPAHKIHPHIRDSGLVFKNKQPSELDADIIFTATPHGASMKIVPDLLETGTKVIDLSGDYRYRDTKVYEKWYGLEHTSDIKGVYGLPEIYRDEIKKADLVGNPGCFPTGAILSSYPLVDNDLVDRIVIDSKTGVSGAGVNPSSTTHYPNIADNVNPYKISSHRHVSEIQQELHGFEDVKVSFTPHLVPVIRGIQTTSHSFLREEHSDITPDELRKFYEKTYGKEYFIKLMDDGEIPHLSSVRGSNFVHIGGFEIDDTGRIVMLSCIDNLVRGASGQAIQNMNIMLGLDETTGLNHFGLNP</sequence>
<evidence type="ECO:0000255" key="1">
    <source>
        <dbReference type="HAMAP-Rule" id="MF_00150"/>
    </source>
</evidence>
<keyword id="KW-0028">Amino-acid biosynthesis</keyword>
<keyword id="KW-0055">Arginine biosynthesis</keyword>
<keyword id="KW-0963">Cytoplasm</keyword>
<keyword id="KW-0521">NADP</keyword>
<keyword id="KW-0560">Oxidoreductase</keyword>